<organism>
    <name type="scientific">Pongo abelii</name>
    <name type="common">Sumatran orangutan</name>
    <name type="synonym">Pongo pygmaeus abelii</name>
    <dbReference type="NCBI Taxonomy" id="9601"/>
    <lineage>
        <taxon>Eukaryota</taxon>
        <taxon>Metazoa</taxon>
        <taxon>Chordata</taxon>
        <taxon>Craniata</taxon>
        <taxon>Vertebrata</taxon>
        <taxon>Euteleostomi</taxon>
        <taxon>Mammalia</taxon>
        <taxon>Eutheria</taxon>
        <taxon>Euarchontoglires</taxon>
        <taxon>Primates</taxon>
        <taxon>Haplorrhini</taxon>
        <taxon>Catarrhini</taxon>
        <taxon>Hominidae</taxon>
        <taxon>Pongo</taxon>
    </lineage>
</organism>
<feature type="initiator methionine" description="Removed" evidence="1">
    <location>
        <position position="1"/>
    </location>
</feature>
<feature type="chain" id="PRO_0000056103" description="RING finger protein 141">
    <location>
        <begin position="2"/>
        <end position="230"/>
    </location>
</feature>
<feature type="zinc finger region" description="RING-type" evidence="2">
    <location>
        <begin position="155"/>
        <end position="192"/>
    </location>
</feature>
<feature type="lipid moiety-binding region" description="N-myristoyl glycine" evidence="1">
    <location>
        <position position="2"/>
    </location>
</feature>
<comment type="function">
    <text>May be involved in spermatogenesis.</text>
</comment>
<comment type="subcellular location">
    <subcellularLocation>
        <location evidence="1">Membrane</location>
        <topology evidence="1">Lipid-anchor</topology>
    </subcellularLocation>
</comment>
<name>RN141_PONAB</name>
<accession>Q5R7K8</accession>
<sequence>MGQQISDQTQLVINKLPEKVAKHVTLVRESGSLTYEEFLGRVAELNDVTAKVASGQEKHLLFEVQPGSDSSAFWKVVVRVVCTKINKSSGIVEASRIMNLYQFIQLYKDITSQAAGVLAQSSTSEEPDENSSSVTSCQASLWMGRVKQLTDEEECCICMDGRADLILPCAHSFCQKCIDKWSDRHRNCPICRLQMTGANESWVVSDAPTEDDMANYILNMADEAGQPHRP</sequence>
<gene>
    <name type="primary">RNF141</name>
</gene>
<protein>
    <recommendedName>
        <fullName>RING finger protein 141</fullName>
    </recommendedName>
</protein>
<proteinExistence type="evidence at transcript level"/>
<keyword id="KW-0449">Lipoprotein</keyword>
<keyword id="KW-0472">Membrane</keyword>
<keyword id="KW-0479">Metal-binding</keyword>
<keyword id="KW-0519">Myristate</keyword>
<keyword id="KW-1185">Reference proteome</keyword>
<keyword id="KW-0862">Zinc</keyword>
<keyword id="KW-0863">Zinc-finger</keyword>
<dbReference type="EMBL" id="CR860107">
    <property type="protein sequence ID" value="CAH92252.1"/>
    <property type="molecule type" value="mRNA"/>
</dbReference>
<dbReference type="RefSeq" id="NP_001126318.1">
    <property type="nucleotide sequence ID" value="NM_001132846.1"/>
</dbReference>
<dbReference type="RefSeq" id="XP_063584009.1">
    <property type="nucleotide sequence ID" value="XM_063727939.1"/>
</dbReference>
<dbReference type="BMRB" id="Q5R7K8"/>
<dbReference type="SMR" id="Q5R7K8"/>
<dbReference type="FunCoup" id="Q5R7K8">
    <property type="interactions" value="894"/>
</dbReference>
<dbReference type="STRING" id="9601.ENSPPYP00000004005"/>
<dbReference type="Ensembl" id="ENSPPYT00000050890.1">
    <property type="protein sequence ID" value="ENSPPYP00000029600.1"/>
    <property type="gene ID" value="ENSPPYG00000033223.1"/>
</dbReference>
<dbReference type="GeneID" id="100173297"/>
<dbReference type="KEGG" id="pon:100173297"/>
<dbReference type="CTD" id="50862"/>
<dbReference type="eggNOG" id="KOG1039">
    <property type="taxonomic scope" value="Eukaryota"/>
</dbReference>
<dbReference type="GeneTree" id="ENSGT00390000003145"/>
<dbReference type="InParanoid" id="Q5R7K8"/>
<dbReference type="OMA" id="RHRNCPV"/>
<dbReference type="OrthoDB" id="1630758at2759"/>
<dbReference type="Proteomes" id="UP000001595">
    <property type="component" value="Chromosome 11"/>
</dbReference>
<dbReference type="GO" id="GO:0016020">
    <property type="term" value="C:membrane"/>
    <property type="evidence" value="ECO:0007669"/>
    <property type="project" value="UniProtKB-SubCell"/>
</dbReference>
<dbReference type="GO" id="GO:0004842">
    <property type="term" value="F:ubiquitin-protein transferase activity"/>
    <property type="evidence" value="ECO:0007669"/>
    <property type="project" value="Ensembl"/>
</dbReference>
<dbReference type="GO" id="GO:0008270">
    <property type="term" value="F:zinc ion binding"/>
    <property type="evidence" value="ECO:0007669"/>
    <property type="project" value="UniProtKB-KW"/>
</dbReference>
<dbReference type="GO" id="GO:0051865">
    <property type="term" value="P:protein autoubiquitination"/>
    <property type="evidence" value="ECO:0007669"/>
    <property type="project" value="Ensembl"/>
</dbReference>
<dbReference type="GO" id="GO:0006355">
    <property type="term" value="P:regulation of DNA-templated transcription"/>
    <property type="evidence" value="ECO:0007669"/>
    <property type="project" value="Ensembl"/>
</dbReference>
<dbReference type="CDD" id="cd16545">
    <property type="entry name" value="RING-HC_RNF141"/>
    <property type="match status" value="1"/>
</dbReference>
<dbReference type="FunFam" id="3.30.40.10:FF:000160">
    <property type="entry name" value="Ring finger protein 141"/>
    <property type="match status" value="1"/>
</dbReference>
<dbReference type="Gene3D" id="3.30.40.10">
    <property type="entry name" value="Zinc/RING finger domain, C3HC4 (zinc finger)"/>
    <property type="match status" value="1"/>
</dbReference>
<dbReference type="InterPro" id="IPR043400">
    <property type="entry name" value="RING-HC_RNF141"/>
</dbReference>
<dbReference type="InterPro" id="IPR047126">
    <property type="entry name" value="RNF141-like"/>
</dbReference>
<dbReference type="InterPro" id="IPR001841">
    <property type="entry name" value="Znf_RING"/>
</dbReference>
<dbReference type="InterPro" id="IPR013083">
    <property type="entry name" value="Znf_RING/FYVE/PHD"/>
</dbReference>
<dbReference type="InterPro" id="IPR017907">
    <property type="entry name" value="Znf_RING_CS"/>
</dbReference>
<dbReference type="PANTHER" id="PTHR12109:SF3">
    <property type="entry name" value="RING FINGER PROTEIN 141"/>
    <property type="match status" value="1"/>
</dbReference>
<dbReference type="PANTHER" id="PTHR12109">
    <property type="entry name" value="RING FINGER PROTEIN 141-RELATED"/>
    <property type="match status" value="1"/>
</dbReference>
<dbReference type="Pfam" id="PF13639">
    <property type="entry name" value="zf-RING_2"/>
    <property type="match status" value="1"/>
</dbReference>
<dbReference type="SMART" id="SM00184">
    <property type="entry name" value="RING"/>
    <property type="match status" value="1"/>
</dbReference>
<dbReference type="SUPFAM" id="SSF57850">
    <property type="entry name" value="RING/U-box"/>
    <property type="match status" value="1"/>
</dbReference>
<dbReference type="PROSITE" id="PS00518">
    <property type="entry name" value="ZF_RING_1"/>
    <property type="match status" value="1"/>
</dbReference>
<dbReference type="PROSITE" id="PS50089">
    <property type="entry name" value="ZF_RING_2"/>
    <property type="match status" value="1"/>
</dbReference>
<reference key="1">
    <citation type="submission" date="2004-11" db="EMBL/GenBank/DDBJ databases">
        <authorList>
            <consortium name="The German cDNA consortium"/>
        </authorList>
    </citation>
    <scope>NUCLEOTIDE SEQUENCE [LARGE SCALE MRNA]</scope>
    <source>
        <tissue>Brain cortex</tissue>
    </source>
</reference>
<evidence type="ECO:0000250" key="1">
    <source>
        <dbReference type="UniProtKB" id="Q8WVD5"/>
    </source>
</evidence>
<evidence type="ECO:0000255" key="2">
    <source>
        <dbReference type="PROSITE-ProRule" id="PRU00175"/>
    </source>
</evidence>